<reference key="1">
    <citation type="journal article" date="2007" name="Nature">
        <title>Evolution of genes and genomes on the Drosophila phylogeny.</title>
        <authorList>
            <consortium name="Drosophila 12 genomes consortium"/>
        </authorList>
    </citation>
    <scope>NUCLEOTIDE SEQUENCE [LARGE SCALE GENOMIC DNA]</scope>
    <source>
        <strain>MSH-3 / Tucson 14011-0111.49</strain>
    </source>
</reference>
<dbReference type="EMBL" id="CH479198">
    <property type="protein sequence ID" value="EDW28025.1"/>
    <property type="molecule type" value="Genomic_DNA"/>
</dbReference>
<dbReference type="SMR" id="B4GZ07"/>
<dbReference type="STRING" id="7234.B4GZ07"/>
<dbReference type="EnsemblMetazoa" id="FBtr0192816">
    <property type="protein sequence ID" value="FBpp0191308"/>
    <property type="gene ID" value="FBgn0164782"/>
</dbReference>
<dbReference type="EnsemblMetazoa" id="XM_002023786.2">
    <property type="protein sequence ID" value="XP_002023822.1"/>
    <property type="gene ID" value="LOC6598641"/>
</dbReference>
<dbReference type="GeneID" id="6598641"/>
<dbReference type="KEGG" id="dpe:6598641"/>
<dbReference type="CTD" id="41230"/>
<dbReference type="eggNOG" id="KOG1400">
    <property type="taxonomic scope" value="Eukaryota"/>
</dbReference>
<dbReference type="HOGENOM" id="CLU_028769_0_0_1"/>
<dbReference type="OMA" id="SPQYIAR"/>
<dbReference type="OrthoDB" id="267517at2759"/>
<dbReference type="PhylomeDB" id="B4GZ07"/>
<dbReference type="UniPathway" id="UPA00143"/>
<dbReference type="Proteomes" id="UP000008744">
    <property type="component" value="Unassembled WGS sequence"/>
</dbReference>
<dbReference type="GO" id="GO:0005634">
    <property type="term" value="C:nucleus"/>
    <property type="evidence" value="ECO:0007669"/>
    <property type="project" value="UniProtKB-SubCell"/>
</dbReference>
<dbReference type="GO" id="GO:0046872">
    <property type="term" value="F:metal ion binding"/>
    <property type="evidence" value="ECO:0007669"/>
    <property type="project" value="UniProtKB-KW"/>
</dbReference>
<dbReference type="GO" id="GO:1900075">
    <property type="term" value="P:positive regulation of neuromuscular synaptic transmission"/>
    <property type="evidence" value="ECO:0007669"/>
    <property type="project" value="EnsemblMetazoa"/>
</dbReference>
<dbReference type="GO" id="GO:0030177">
    <property type="term" value="P:positive regulation of Wnt signaling pathway"/>
    <property type="evidence" value="ECO:0007669"/>
    <property type="project" value="EnsemblMetazoa"/>
</dbReference>
<dbReference type="GO" id="GO:0016567">
    <property type="term" value="P:protein ubiquitination"/>
    <property type="evidence" value="ECO:0007669"/>
    <property type="project" value="UniProtKB-UniPathway"/>
</dbReference>
<dbReference type="CDD" id="cd15777">
    <property type="entry name" value="CRBN_C_like"/>
    <property type="match status" value="1"/>
</dbReference>
<dbReference type="FunFam" id="2.170.150.20:FF:000005">
    <property type="entry name" value="Blast:Protein cereblon homolog"/>
    <property type="match status" value="1"/>
</dbReference>
<dbReference type="Gene3D" id="1.20.58.1480">
    <property type="match status" value="1"/>
</dbReference>
<dbReference type="Gene3D" id="2.170.150.20">
    <property type="entry name" value="Peptide methionine sulfoxide reductase"/>
    <property type="match status" value="1"/>
</dbReference>
<dbReference type="InterPro" id="IPR034750">
    <property type="entry name" value="CULT"/>
</dbReference>
<dbReference type="InterPro" id="IPR003111">
    <property type="entry name" value="Lon_prtase_N"/>
</dbReference>
<dbReference type="InterPro" id="IPR004910">
    <property type="entry name" value="Yippee/Mis18/Cereblon"/>
</dbReference>
<dbReference type="Pfam" id="PF03226">
    <property type="entry name" value="Yippee-Mis18"/>
    <property type="match status" value="1"/>
</dbReference>
<dbReference type="PROSITE" id="PS51788">
    <property type="entry name" value="CULT"/>
    <property type="match status" value="1"/>
</dbReference>
<dbReference type="PROSITE" id="PS51787">
    <property type="entry name" value="LON_N"/>
    <property type="match status" value="1"/>
</dbReference>
<feature type="chain" id="PRO_0000393883" description="Protein cereblon">
    <location>
        <begin position="1"/>
        <end position="616"/>
    </location>
</feature>
<feature type="domain" description="Lon N-terminal" evidence="3">
    <location>
        <begin position="257"/>
        <end position="482"/>
    </location>
</feature>
<feature type="domain" description="CULT" evidence="4">
    <location>
        <begin position="481"/>
        <end position="590"/>
    </location>
</feature>
<feature type="region of interest" description="Disordered" evidence="5">
    <location>
        <begin position="1"/>
        <end position="39"/>
    </location>
</feature>
<feature type="region of interest" description="Disordered" evidence="5">
    <location>
        <begin position="63"/>
        <end position="137"/>
    </location>
</feature>
<feature type="region of interest" description="Disordered" evidence="5">
    <location>
        <begin position="182"/>
        <end position="220"/>
    </location>
</feature>
<feature type="compositionally biased region" description="Low complexity" evidence="5">
    <location>
        <begin position="11"/>
        <end position="32"/>
    </location>
</feature>
<feature type="compositionally biased region" description="Acidic residues" evidence="5">
    <location>
        <begin position="96"/>
        <end position="107"/>
    </location>
</feature>
<feature type="compositionally biased region" description="Basic and acidic residues" evidence="5">
    <location>
        <begin position="183"/>
        <end position="192"/>
    </location>
</feature>
<feature type="compositionally biased region" description="Acidic residues" evidence="5">
    <location>
        <begin position="194"/>
        <end position="203"/>
    </location>
</feature>
<feature type="compositionally biased region" description="Pro residues" evidence="5">
    <location>
        <begin position="206"/>
        <end position="215"/>
    </location>
</feature>
<feature type="binding site" evidence="4">
    <location>
        <position position="486"/>
    </location>
    <ligand>
        <name>Zn(2+)</name>
        <dbReference type="ChEBI" id="CHEBI:29105"/>
    </ligand>
</feature>
<feature type="binding site" evidence="4">
    <location>
        <position position="489"/>
    </location>
    <ligand>
        <name>Zn(2+)</name>
        <dbReference type="ChEBI" id="CHEBI:29105"/>
    </ligand>
</feature>
<feature type="binding site" evidence="4">
    <location>
        <position position="555"/>
    </location>
    <ligand>
        <name>Zn(2+)</name>
        <dbReference type="ChEBI" id="CHEBI:29105"/>
    </ligand>
</feature>
<feature type="binding site" evidence="4">
    <location>
        <position position="558"/>
    </location>
    <ligand>
        <name>Zn(2+)</name>
        <dbReference type="ChEBI" id="CHEBI:29105"/>
    </ligand>
</feature>
<gene>
    <name evidence="2" type="primary">ohgt</name>
    <name evidence="2" type="synonym">crbn</name>
    <name type="ORF">GL27201</name>
</gene>
<sequence length="616" mass="69099">MDEEETAEINAQEQEVAGSAGEAAAGPSGAEVQPNDDSVAVERVIDVFEETAEMEAAMIERFFGPSGEVAEEGTLPVPGPSADGEGSANAGGERPSEEDIVLDDGTESDGSYNRPGSDMSLDSPNSEDDSDVEAMPRWMIPQNRLRFAVDMMVSQARNQDGGIAALLNRDNFLQRVRSMVFSQERRRSRNSDEVSPEAEDDELPEHPPPPPPRPPIDIDMEEGVHFDTNLPAEHSYFGPNLNRVPGVNYQEVGSTHHMLIFLHQYILFPGEVLPFMIDGSLFDDDMSGLDGLIFAVAFPLMKPPEDSKKLYGVTCQIYEKGDNGRHLTFYKSRALQRIVINCSDIKGLPQYIARNPTNKCHSKVKILPEYFLPEPLKCIDMGSMSRFRDIPSMRDKYLRYQISSTPWPVEVCQEYAYEDIVERARKKLEVHKIDTMPKCPIQMSFWLVRNLHLTEKMMSQMFLTDSVNLRLQLIGGILKEETLFYCRYCNSSLAYCSDLFAMSKHGVQTQYCNPGGYIHETNTVYRVISHAIGYSGEPSTRFSWFPGYQWHIILCKFCAQHVGWEFKAVEPNLAPKVFYGLAGSSVRIGKAGDSATVNGNNFVVRNMLRVISEGME</sequence>
<accession>B4GZ07</accession>
<name>CRBN_DROPE</name>
<evidence type="ECO:0000250" key="1">
    <source>
        <dbReference type="UniProtKB" id="Q96SW2"/>
    </source>
</evidence>
<evidence type="ECO:0000250" key="2">
    <source>
        <dbReference type="UniProtKB" id="Q9VH36"/>
    </source>
</evidence>
<evidence type="ECO:0000255" key="3">
    <source>
        <dbReference type="PROSITE-ProRule" id="PRU01123"/>
    </source>
</evidence>
<evidence type="ECO:0000255" key="4">
    <source>
        <dbReference type="PROSITE-ProRule" id="PRU01124"/>
    </source>
</evidence>
<evidence type="ECO:0000256" key="5">
    <source>
        <dbReference type="SAM" id="MobiDB-lite"/>
    </source>
</evidence>
<evidence type="ECO:0000305" key="6"/>
<comment type="function">
    <text evidence="2">Substrate recognition component of a DCX (DDB1-CUL4-X-box) E3 protein ligase complex that mediates the ubiquitination and subsequent proteasomal degradation of target proteins. Has an essential role in mediating growth by negatively regulating insulin signaling. It also has a role in maintaining presynaptic function in the neuromuscular junction synapses of third-instar larvae.</text>
</comment>
<comment type="pathway">
    <text evidence="1">Protein modification; protein ubiquitination.</text>
</comment>
<comment type="subunit">
    <text evidence="1 2">Likely a component of a DCX (DDB1-CUL4-X-box) protein ligase complex (By similarity). May interact with pic/DDB1 (By similarity).</text>
</comment>
<comment type="subcellular location">
    <subcellularLocation>
        <location evidence="2">Nucleus</location>
    </subcellularLocation>
</comment>
<comment type="PTM">
    <text evidence="2">Ubiquitinated.</text>
</comment>
<comment type="similarity">
    <text evidence="6">Belongs to the CRBN family.</text>
</comment>
<proteinExistence type="inferred from homology"/>
<organism>
    <name type="scientific">Drosophila persimilis</name>
    <name type="common">Fruit fly</name>
    <dbReference type="NCBI Taxonomy" id="7234"/>
    <lineage>
        <taxon>Eukaryota</taxon>
        <taxon>Metazoa</taxon>
        <taxon>Ecdysozoa</taxon>
        <taxon>Arthropoda</taxon>
        <taxon>Hexapoda</taxon>
        <taxon>Insecta</taxon>
        <taxon>Pterygota</taxon>
        <taxon>Neoptera</taxon>
        <taxon>Endopterygota</taxon>
        <taxon>Diptera</taxon>
        <taxon>Brachycera</taxon>
        <taxon>Muscomorpha</taxon>
        <taxon>Ephydroidea</taxon>
        <taxon>Drosophilidae</taxon>
        <taxon>Drosophila</taxon>
        <taxon>Sophophora</taxon>
    </lineage>
</organism>
<protein>
    <recommendedName>
        <fullName evidence="2">Protein cereblon</fullName>
    </recommendedName>
    <alternativeName>
        <fullName evidence="2">Protein ohgata</fullName>
    </alternativeName>
</protein>
<keyword id="KW-0479">Metal-binding</keyword>
<keyword id="KW-0539">Nucleus</keyword>
<keyword id="KW-1185">Reference proteome</keyword>
<keyword id="KW-0832">Ubl conjugation</keyword>
<keyword id="KW-0833">Ubl conjugation pathway</keyword>
<keyword id="KW-0862">Zinc</keyword>